<accession>Q753M0</accession>
<organism>
    <name type="scientific">Eremothecium gossypii (strain ATCC 10895 / CBS 109.51 / FGSC 9923 / NRRL Y-1056)</name>
    <name type="common">Yeast</name>
    <name type="synonym">Ashbya gossypii</name>
    <dbReference type="NCBI Taxonomy" id="284811"/>
    <lineage>
        <taxon>Eukaryota</taxon>
        <taxon>Fungi</taxon>
        <taxon>Dikarya</taxon>
        <taxon>Ascomycota</taxon>
        <taxon>Saccharomycotina</taxon>
        <taxon>Saccharomycetes</taxon>
        <taxon>Saccharomycetales</taxon>
        <taxon>Saccharomycetaceae</taxon>
        <taxon>Eremothecium</taxon>
    </lineage>
</organism>
<reference key="1">
    <citation type="journal article" date="2004" name="Science">
        <title>The Ashbya gossypii genome as a tool for mapping the ancient Saccharomyces cerevisiae genome.</title>
        <authorList>
            <person name="Dietrich F.S."/>
            <person name="Voegeli S."/>
            <person name="Brachat S."/>
            <person name="Lerch A."/>
            <person name="Gates K."/>
            <person name="Steiner S."/>
            <person name="Mohr C."/>
            <person name="Poehlmann R."/>
            <person name="Luedi P."/>
            <person name="Choi S."/>
            <person name="Wing R.A."/>
            <person name="Flavier A."/>
            <person name="Gaffney T.D."/>
            <person name="Philippsen P."/>
        </authorList>
    </citation>
    <scope>NUCLEOTIDE SEQUENCE [LARGE SCALE GENOMIC DNA]</scope>
    <source>
        <strain>ATCC 10895 / CBS 109.51 / FGSC 9923 / NRRL Y-1056</strain>
    </source>
</reference>
<reference key="2">
    <citation type="journal article" date="2013" name="G3 (Bethesda)">
        <title>Genomes of Ashbya fungi isolated from insects reveal four mating-type loci, numerous translocations, lack of transposons, and distinct gene duplications.</title>
        <authorList>
            <person name="Dietrich F.S."/>
            <person name="Voegeli S."/>
            <person name="Kuo S."/>
            <person name="Philippsen P."/>
        </authorList>
    </citation>
    <scope>GENOME REANNOTATION</scope>
    <source>
        <strain>ATCC 10895 / CBS 109.51 / FGSC 9923 / NRRL Y-1056</strain>
    </source>
</reference>
<comment type="catalytic activity">
    <reaction>
        <text>oxaloacetate + ATP = phosphoenolpyruvate + ADP + CO2</text>
        <dbReference type="Rhea" id="RHEA:18617"/>
        <dbReference type="ChEBI" id="CHEBI:16452"/>
        <dbReference type="ChEBI" id="CHEBI:16526"/>
        <dbReference type="ChEBI" id="CHEBI:30616"/>
        <dbReference type="ChEBI" id="CHEBI:58702"/>
        <dbReference type="ChEBI" id="CHEBI:456216"/>
        <dbReference type="EC" id="4.1.1.49"/>
    </reaction>
</comment>
<comment type="pathway">
    <text>Carbohydrate biosynthesis; gluconeogenesis.</text>
</comment>
<comment type="similarity">
    <text evidence="2">Belongs to the phosphoenolpyruvate carboxykinase (ATP) family.</text>
</comment>
<feature type="chain" id="PRO_0000203869" description="Phosphoenolpyruvate carboxykinase (ATP)">
    <location>
        <begin position="1"/>
        <end position="541"/>
    </location>
</feature>
<feature type="binding site" evidence="1">
    <location>
        <begin position="243"/>
        <end position="250"/>
    </location>
    <ligand>
        <name>ATP</name>
        <dbReference type="ChEBI" id="CHEBI:30616"/>
    </ligand>
</feature>
<protein>
    <recommendedName>
        <fullName>Phosphoenolpyruvate carboxykinase (ATP)</fullName>
        <ecNumber>4.1.1.49</ecNumber>
    </recommendedName>
</protein>
<sequence>MSPSKVYQTPEEKIRAELGLSSGVLTIRRNAPAAVLYEDALAERKTAISSTGALIAYSGEKTGRSPKDKRIVDEPTSSDNIWWGPVNRKASEKTWLINRERAADFLRTREHLYIVDAYAGWDPRYRIKIRIVCCRAYHALFMTNMLIRPTEEELAEFGEPDFTVWNAGQFPANTHTEGMSSKTTVEINFRAMEMVILGTEYAGEMKKGIFTVMFYLMPINHNVLTLHSSANQGPNNDVTLFFGLSGTGKTTLSADQHRKLIGDDEHCWSDYGVFNIEGGCYAKCIGLSGEKEPEIFNAIKYGSVLENVVYDPVTRVVDYEDSSITENTRCAYPIEYIPSAQIPCLSENHPSNIVLLTCDASGVLPPVSRLTPEQVMYHFISGYTSKMAGTEQGVTEPEATFSSCFGQPFLALHPMKYATMLAEKMSQHNASAWLINTGWTGSSYTAGGKRCPLKYTRAILDSIHDGTLAQAEYETLPVFGLSIPKAVEGVPAELLNPAKNWVEGEGKYASAVSALASKFTENFKIYQDQATEEVVRAGPQI</sequence>
<dbReference type="EC" id="4.1.1.49"/>
<dbReference type="EMBL" id="AE016819">
    <property type="protein sequence ID" value="AAS53663.1"/>
    <property type="molecule type" value="Genomic_DNA"/>
</dbReference>
<dbReference type="RefSeq" id="NP_985839.1">
    <property type="nucleotide sequence ID" value="NM_211194.1"/>
</dbReference>
<dbReference type="SMR" id="Q753M0"/>
<dbReference type="FunCoup" id="Q753M0">
    <property type="interactions" value="286"/>
</dbReference>
<dbReference type="STRING" id="284811.Q753M0"/>
<dbReference type="EnsemblFungi" id="AAS53663">
    <property type="protein sequence ID" value="AAS53663"/>
    <property type="gene ID" value="AGOS_AFR292W"/>
</dbReference>
<dbReference type="GeneID" id="4622102"/>
<dbReference type="KEGG" id="ago:AGOS_AFR292W"/>
<dbReference type="eggNOG" id="ENOG502QQI5">
    <property type="taxonomic scope" value="Eukaryota"/>
</dbReference>
<dbReference type="HOGENOM" id="CLU_018247_2_0_1"/>
<dbReference type="InParanoid" id="Q753M0"/>
<dbReference type="OMA" id="MRYAGEM"/>
<dbReference type="OrthoDB" id="184182at2759"/>
<dbReference type="UniPathway" id="UPA00138"/>
<dbReference type="Proteomes" id="UP000000591">
    <property type="component" value="Chromosome VI"/>
</dbReference>
<dbReference type="GO" id="GO:0005829">
    <property type="term" value="C:cytosol"/>
    <property type="evidence" value="ECO:0000318"/>
    <property type="project" value="GO_Central"/>
</dbReference>
<dbReference type="GO" id="GO:0005524">
    <property type="term" value="F:ATP binding"/>
    <property type="evidence" value="ECO:0007669"/>
    <property type="project" value="UniProtKB-KW"/>
</dbReference>
<dbReference type="GO" id="GO:0004612">
    <property type="term" value="F:phosphoenolpyruvate carboxykinase (ATP) activity"/>
    <property type="evidence" value="ECO:0000318"/>
    <property type="project" value="GO_Central"/>
</dbReference>
<dbReference type="GO" id="GO:0006094">
    <property type="term" value="P:gluconeogenesis"/>
    <property type="evidence" value="ECO:0000318"/>
    <property type="project" value="GO_Central"/>
</dbReference>
<dbReference type="CDD" id="cd00484">
    <property type="entry name" value="PEPCK_ATP"/>
    <property type="match status" value="1"/>
</dbReference>
<dbReference type="FunFam" id="2.170.8.10:FF:000001">
    <property type="entry name" value="Phosphoenolpyruvate carboxykinase (ATP)"/>
    <property type="match status" value="1"/>
</dbReference>
<dbReference type="FunFam" id="3.40.449.10:FF:000002">
    <property type="entry name" value="Phosphoenolpyruvate carboxykinase [ATP]"/>
    <property type="match status" value="1"/>
</dbReference>
<dbReference type="Gene3D" id="3.90.228.20">
    <property type="match status" value="1"/>
</dbReference>
<dbReference type="Gene3D" id="3.40.449.10">
    <property type="entry name" value="Phosphoenolpyruvate Carboxykinase, domain 1"/>
    <property type="match status" value="1"/>
</dbReference>
<dbReference type="Gene3D" id="2.170.8.10">
    <property type="entry name" value="Phosphoenolpyruvate Carboxykinase, domain 2"/>
    <property type="match status" value="1"/>
</dbReference>
<dbReference type="HAMAP" id="MF_00453">
    <property type="entry name" value="PEPCK_ATP"/>
    <property type="match status" value="1"/>
</dbReference>
<dbReference type="InterPro" id="IPR001272">
    <property type="entry name" value="PEP_carboxykinase_ATP"/>
</dbReference>
<dbReference type="InterPro" id="IPR013035">
    <property type="entry name" value="PEP_carboxykinase_C"/>
</dbReference>
<dbReference type="InterPro" id="IPR008210">
    <property type="entry name" value="PEP_carboxykinase_N"/>
</dbReference>
<dbReference type="InterPro" id="IPR015994">
    <property type="entry name" value="PEPCK_ATP_CS"/>
</dbReference>
<dbReference type="NCBIfam" id="TIGR00224">
    <property type="entry name" value="pckA"/>
    <property type="match status" value="1"/>
</dbReference>
<dbReference type="NCBIfam" id="NF006820">
    <property type="entry name" value="PRK09344.1-2"/>
    <property type="match status" value="1"/>
</dbReference>
<dbReference type="NCBIfam" id="NF006821">
    <property type="entry name" value="PRK09344.1-3"/>
    <property type="match status" value="1"/>
</dbReference>
<dbReference type="PANTHER" id="PTHR30031:SF0">
    <property type="entry name" value="PHOSPHOENOLPYRUVATE CARBOXYKINASE (ATP)"/>
    <property type="match status" value="1"/>
</dbReference>
<dbReference type="PANTHER" id="PTHR30031">
    <property type="entry name" value="PHOSPHOENOLPYRUVATE CARBOXYKINASE ATP"/>
    <property type="match status" value="1"/>
</dbReference>
<dbReference type="Pfam" id="PF01293">
    <property type="entry name" value="PEPCK_ATP"/>
    <property type="match status" value="1"/>
</dbReference>
<dbReference type="PIRSF" id="PIRSF006294">
    <property type="entry name" value="PEP_crbxkin"/>
    <property type="match status" value="1"/>
</dbReference>
<dbReference type="SUPFAM" id="SSF68923">
    <property type="entry name" value="PEP carboxykinase N-terminal domain"/>
    <property type="match status" value="1"/>
</dbReference>
<dbReference type="SUPFAM" id="SSF53795">
    <property type="entry name" value="PEP carboxykinase-like"/>
    <property type="match status" value="1"/>
</dbReference>
<dbReference type="PROSITE" id="PS00532">
    <property type="entry name" value="PEPCK_ATP"/>
    <property type="match status" value="1"/>
</dbReference>
<proteinExistence type="inferred from homology"/>
<gene>
    <name type="primary">PCK1</name>
    <name type="ordered locus">AFR292W</name>
</gene>
<name>PCKA_EREGS</name>
<keyword id="KW-0067">ATP-binding</keyword>
<keyword id="KW-0210">Decarboxylase</keyword>
<keyword id="KW-0312">Gluconeogenesis</keyword>
<keyword id="KW-0456">Lyase</keyword>
<keyword id="KW-0547">Nucleotide-binding</keyword>
<keyword id="KW-1185">Reference proteome</keyword>
<evidence type="ECO:0000255" key="1"/>
<evidence type="ECO:0000305" key="2"/>